<protein>
    <recommendedName>
        <fullName evidence="1">Cell division topological specificity factor</fullName>
    </recommendedName>
</protein>
<accession>Q9HYZ5</accession>
<comment type="function">
    <text evidence="1">Prevents the cell division inhibition by proteins MinC and MinD at internal division sites while permitting inhibition at polar sites. This ensures cell division at the proper site by restricting the formation of a division septum at the midpoint of the long axis of the cell.</text>
</comment>
<comment type="similarity">
    <text evidence="1">Belongs to the MinE family.</text>
</comment>
<organism>
    <name type="scientific">Pseudomonas aeruginosa (strain ATCC 15692 / DSM 22644 / CIP 104116 / JCM 14847 / LMG 12228 / 1C / PRS 101 / PAO1)</name>
    <dbReference type="NCBI Taxonomy" id="208964"/>
    <lineage>
        <taxon>Bacteria</taxon>
        <taxon>Pseudomonadati</taxon>
        <taxon>Pseudomonadota</taxon>
        <taxon>Gammaproteobacteria</taxon>
        <taxon>Pseudomonadales</taxon>
        <taxon>Pseudomonadaceae</taxon>
        <taxon>Pseudomonas</taxon>
    </lineage>
</organism>
<proteinExistence type="inferred from homology"/>
<dbReference type="EMBL" id="AE004091">
    <property type="protein sequence ID" value="AAG06633.1"/>
    <property type="molecule type" value="Genomic_DNA"/>
</dbReference>
<dbReference type="PIR" id="G83239">
    <property type="entry name" value="G83239"/>
</dbReference>
<dbReference type="RefSeq" id="NP_251935.1">
    <property type="nucleotide sequence ID" value="NC_002516.2"/>
</dbReference>
<dbReference type="RefSeq" id="WP_003091581.1">
    <property type="nucleotide sequence ID" value="NZ_QZGE01000019.1"/>
</dbReference>
<dbReference type="SMR" id="Q9HYZ5"/>
<dbReference type="FunCoup" id="Q9HYZ5">
    <property type="interactions" value="160"/>
</dbReference>
<dbReference type="STRING" id="208964.PA3245"/>
<dbReference type="PaxDb" id="208964-PA3245"/>
<dbReference type="DNASU" id="882408"/>
<dbReference type="GeneID" id="77220234"/>
<dbReference type="GeneID" id="882408"/>
<dbReference type="KEGG" id="pae:PA3245"/>
<dbReference type="PATRIC" id="fig|208964.12.peg.3392"/>
<dbReference type="PseudoCAP" id="PA3245"/>
<dbReference type="HOGENOM" id="CLU_137929_2_1_6"/>
<dbReference type="InParanoid" id="Q9HYZ5"/>
<dbReference type="OrthoDB" id="9802655at2"/>
<dbReference type="PhylomeDB" id="Q9HYZ5"/>
<dbReference type="BioCyc" id="PAER208964:G1FZ6-3304-MONOMER"/>
<dbReference type="Proteomes" id="UP000002438">
    <property type="component" value="Chromosome"/>
</dbReference>
<dbReference type="GO" id="GO:0005886">
    <property type="term" value="C:plasma membrane"/>
    <property type="evidence" value="ECO:0000318"/>
    <property type="project" value="GO_Central"/>
</dbReference>
<dbReference type="GO" id="GO:0000918">
    <property type="term" value="P:division septum site selection"/>
    <property type="evidence" value="ECO:0000318"/>
    <property type="project" value="GO_Central"/>
</dbReference>
<dbReference type="GO" id="GO:0032955">
    <property type="term" value="P:regulation of division septum assembly"/>
    <property type="evidence" value="ECO:0007669"/>
    <property type="project" value="InterPro"/>
</dbReference>
<dbReference type="FunFam" id="3.30.1070.10:FF:000001">
    <property type="entry name" value="Cell division topological specificity factor"/>
    <property type="match status" value="1"/>
</dbReference>
<dbReference type="Gene3D" id="3.30.1070.10">
    <property type="entry name" value="Cell division topological specificity factor MinE"/>
    <property type="match status" value="1"/>
</dbReference>
<dbReference type="HAMAP" id="MF_00262">
    <property type="entry name" value="MinE"/>
    <property type="match status" value="1"/>
</dbReference>
<dbReference type="InterPro" id="IPR005527">
    <property type="entry name" value="MinE"/>
</dbReference>
<dbReference type="InterPro" id="IPR036707">
    <property type="entry name" value="MinE_sf"/>
</dbReference>
<dbReference type="NCBIfam" id="TIGR01215">
    <property type="entry name" value="minE"/>
    <property type="match status" value="1"/>
</dbReference>
<dbReference type="NCBIfam" id="NF001422">
    <property type="entry name" value="PRK00296.1"/>
    <property type="match status" value="1"/>
</dbReference>
<dbReference type="NCBIfam" id="NF010595">
    <property type="entry name" value="PRK13989.1"/>
    <property type="match status" value="1"/>
</dbReference>
<dbReference type="Pfam" id="PF03776">
    <property type="entry name" value="MinE"/>
    <property type="match status" value="1"/>
</dbReference>
<dbReference type="SUPFAM" id="SSF55229">
    <property type="entry name" value="Cell division protein MinE topological specificity domain"/>
    <property type="match status" value="1"/>
</dbReference>
<evidence type="ECO:0000255" key="1">
    <source>
        <dbReference type="HAMAP-Rule" id="MF_00262"/>
    </source>
</evidence>
<name>MINE_PSEAE</name>
<reference key="1">
    <citation type="journal article" date="2000" name="Nature">
        <title>Complete genome sequence of Pseudomonas aeruginosa PAO1, an opportunistic pathogen.</title>
        <authorList>
            <person name="Stover C.K."/>
            <person name="Pham X.-Q.T."/>
            <person name="Erwin A.L."/>
            <person name="Mizoguchi S.D."/>
            <person name="Warrener P."/>
            <person name="Hickey M.J."/>
            <person name="Brinkman F.S.L."/>
            <person name="Hufnagle W.O."/>
            <person name="Kowalik D.J."/>
            <person name="Lagrou M."/>
            <person name="Garber R.L."/>
            <person name="Goltry L."/>
            <person name="Tolentino E."/>
            <person name="Westbrock-Wadman S."/>
            <person name="Yuan Y."/>
            <person name="Brody L.L."/>
            <person name="Coulter S.N."/>
            <person name="Folger K.R."/>
            <person name="Kas A."/>
            <person name="Larbig K."/>
            <person name="Lim R.M."/>
            <person name="Smith K.A."/>
            <person name="Spencer D.H."/>
            <person name="Wong G.K.-S."/>
            <person name="Wu Z."/>
            <person name="Paulsen I.T."/>
            <person name="Reizer J."/>
            <person name="Saier M.H. Jr."/>
            <person name="Hancock R.E.W."/>
            <person name="Lory S."/>
            <person name="Olson M.V."/>
        </authorList>
    </citation>
    <scope>NUCLEOTIDE SEQUENCE [LARGE SCALE GENOMIC DNA]</scope>
    <source>
        <strain>ATCC 15692 / DSM 22644 / CIP 104116 / JCM 14847 / LMG 12228 / 1C / PRS 101 / PAO1</strain>
    </source>
</reference>
<keyword id="KW-0131">Cell cycle</keyword>
<keyword id="KW-0132">Cell division</keyword>
<keyword id="KW-1185">Reference proteome</keyword>
<gene>
    <name evidence="1" type="primary">minE</name>
    <name type="ordered locus">PA3245</name>
</gene>
<sequence>MSLLDFFRSRKSQNSASIAKERLQIIVAHERGQRAQPDYLPQLQKDLLEVIRKYVPIDQEQIQVELENQGNCSILELNITLPDR</sequence>
<feature type="chain" id="PRO_0000205882" description="Cell division topological specificity factor">
    <location>
        <begin position="1"/>
        <end position="84"/>
    </location>
</feature>